<reference key="1">
    <citation type="journal article" date="1994" name="Curr. Top. Microbiol. Immunol.">
        <title>Primer-directed sequencing of human papillomavirus types.</title>
        <authorList>
            <person name="Delius H."/>
            <person name="Hofmann B."/>
        </authorList>
    </citation>
    <scope>NUCLEOTIDE SEQUENCE [GENOMIC DNA]</scope>
</reference>
<name>VE2_HPV32</name>
<evidence type="ECO:0000255" key="1">
    <source>
        <dbReference type="HAMAP-Rule" id="MF_04001"/>
    </source>
</evidence>
<evidence type="ECO:0000256" key="2">
    <source>
        <dbReference type="SAM" id="MobiDB-lite"/>
    </source>
</evidence>
<comment type="function">
    <text evidence="1">Plays a role in the initiation of viral DNA replication. A dimer of E2 interacts with a dimer of E1 in order to improve specificity of E1 DNA binding activity. Once the complex recognizes and binds DNA at specific sites, the E2 dimer is removed from DNA. E2 also regulates viral transcription through binding to the E2RE response element (5'-ACCNNNNNNGGT-3') present in multiple copies in the regulatory regions of the viral genome. Activates or represses transcription depending on E2RE's position with regards to proximal promoter elements including the TATA-box. Repression occurs by sterically hindering the assembly of the transcription initiation complex.</text>
</comment>
<comment type="subunit">
    <text evidence="1">Binds DNA as homodimer. Interacts with protein E1; this interaction greatly increases E1 DNA-binding activity. Interacts with protein L1; this interaction enhances E2-dependent replication and transcription activation. Interacts with protein L2; this interaction inhibits E2 transcriptional activity but not DNA replication function E2. Interacts with protein E7; this interaction inhibits E7 oncogenic activity. Interacts with host TAF1; this interaction modulates E2-dependent transcriptional regulation. Interacts with host BRD4; this interaction mediates E2 transcriptional activation function. Additionally, the interaction with host BRD4 on mitotic chromosomes mediates tethering of the viral genome. Interacts with host TOPBP1; this interaction is required for optimal viral DNA replication.</text>
</comment>
<comment type="subcellular location">
    <subcellularLocation>
        <location evidence="1">Host nucleus</location>
    </subcellularLocation>
</comment>
<comment type="PTM">
    <text evidence="1">Phosphorylated.</text>
</comment>
<comment type="similarity">
    <text evidence="1">Belongs to the papillomaviridae E2 protein family.</text>
</comment>
<organismHost>
    <name type="scientific">Homo sapiens</name>
    <name type="common">Human</name>
    <dbReference type="NCBI Taxonomy" id="9606"/>
</organismHost>
<feature type="chain" id="PRO_0000133212" description="Regulatory protein E2">
    <location>
        <begin position="1"/>
        <end position="394"/>
    </location>
</feature>
<feature type="region of interest" description="Transactivation domain" evidence="1">
    <location>
        <begin position="1"/>
        <end position="201"/>
    </location>
</feature>
<feature type="region of interest" description="Disordered" evidence="2">
    <location>
        <begin position="226"/>
        <end position="309"/>
    </location>
</feature>
<feature type="region of interest" description="DNA-binding domain" evidence="1">
    <location>
        <begin position="307"/>
        <end position="394"/>
    </location>
</feature>
<feature type="compositionally biased region" description="Low complexity" evidence="2">
    <location>
        <begin position="226"/>
        <end position="235"/>
    </location>
</feature>
<sequence>METLAKRLDACQEQLLELYEEDSKHLEKHVQHWKCLRIEAALLFKAREMGYAQVGHQIVPALEISRAKAHVAIEIQLALETLLQSTFGTEPWTLQETSYEMWHAEPKKCLKKQGRTVEVVFDGNPENAMHYTAWTFIYVQTLDGTWCKVYGHVCYAGLYYIVDNMKQFYCNFKNEAKKYGVTGQWEVHDGTQVIVSPASISSTTTTEAEVSSSGLTELVQTTDLYNTTPTPTTITRSNCDPDGTDGILYKDPTPTTPPRKRYRQSLQPPTKHLQHYGVTNVPVDPGSQRVTSDNNNNQRRNPCGNQTTPVIHLQGDPNCLKCLRWRLKKNCSHLFTQVSSTWHLTEKDYTRDSKDGIITIHYYNEEQRDKFLSTVKLPPGIKSCIGYMSMLQFM</sequence>
<accession>P36791</accession>
<proteinExistence type="inferred from homology"/>
<gene>
    <name evidence="1" type="primary">E2</name>
</gene>
<keyword id="KW-0010">Activator</keyword>
<keyword id="KW-0235">DNA replication</keyword>
<keyword id="KW-0238">DNA-binding</keyword>
<keyword id="KW-0244">Early protein</keyword>
<keyword id="KW-1048">Host nucleus</keyword>
<keyword id="KW-0597">Phosphoprotein</keyword>
<keyword id="KW-1185">Reference proteome</keyword>
<keyword id="KW-0678">Repressor</keyword>
<keyword id="KW-0804">Transcription</keyword>
<keyword id="KW-0805">Transcription regulation</keyword>
<protein>
    <recommendedName>
        <fullName evidence="1">Regulatory protein E2</fullName>
    </recommendedName>
</protein>
<dbReference type="EMBL" id="X74475">
    <property type="protein sequence ID" value="CAA52552.1"/>
    <property type="molecule type" value="Genomic_DNA"/>
</dbReference>
<dbReference type="PIR" id="S36512">
    <property type="entry name" value="S36512"/>
</dbReference>
<dbReference type="RefSeq" id="NP_041804.1">
    <property type="nucleotide sequence ID" value="NC_001586.1"/>
</dbReference>
<dbReference type="SMR" id="P36791"/>
<dbReference type="BioGRID" id="4263569">
    <property type="interactions" value="18"/>
</dbReference>
<dbReference type="IntAct" id="P36791">
    <property type="interactions" value="28"/>
</dbReference>
<dbReference type="MINT" id="P36791"/>
<dbReference type="GeneID" id="1489423"/>
<dbReference type="KEGG" id="vg:1489423"/>
<dbReference type="OrthoDB" id="15886at10239"/>
<dbReference type="Proteomes" id="UP000009117">
    <property type="component" value="Genome"/>
</dbReference>
<dbReference type="GO" id="GO:0042025">
    <property type="term" value="C:host cell nucleus"/>
    <property type="evidence" value="ECO:0007669"/>
    <property type="project" value="UniProtKB-SubCell"/>
</dbReference>
<dbReference type="GO" id="GO:0003677">
    <property type="term" value="F:DNA binding"/>
    <property type="evidence" value="ECO:0007669"/>
    <property type="project" value="UniProtKB-UniRule"/>
</dbReference>
<dbReference type="GO" id="GO:0003700">
    <property type="term" value="F:DNA-binding transcription factor activity"/>
    <property type="evidence" value="ECO:0007669"/>
    <property type="project" value="UniProtKB-UniRule"/>
</dbReference>
<dbReference type="GO" id="GO:0000166">
    <property type="term" value="F:nucleotide binding"/>
    <property type="evidence" value="ECO:0007669"/>
    <property type="project" value="UniProtKB-UniRule"/>
</dbReference>
<dbReference type="GO" id="GO:0006260">
    <property type="term" value="P:DNA replication"/>
    <property type="evidence" value="ECO:0007669"/>
    <property type="project" value="UniProtKB-KW"/>
</dbReference>
<dbReference type="GO" id="GO:0006351">
    <property type="term" value="P:DNA-templated transcription"/>
    <property type="evidence" value="ECO:0007669"/>
    <property type="project" value="UniProtKB-UniRule"/>
</dbReference>
<dbReference type="GO" id="GO:0006275">
    <property type="term" value="P:regulation of DNA replication"/>
    <property type="evidence" value="ECO:0007669"/>
    <property type="project" value="UniProtKB-UniRule"/>
</dbReference>
<dbReference type="GO" id="GO:0039693">
    <property type="term" value="P:viral DNA genome replication"/>
    <property type="evidence" value="ECO:0007669"/>
    <property type="project" value="UniProtKB-UniRule"/>
</dbReference>
<dbReference type="Gene3D" id="3.30.70.330">
    <property type="match status" value="1"/>
</dbReference>
<dbReference type="Gene3D" id="1.10.287.30">
    <property type="entry name" value="E2 (early) protein, N terminal domain, subdomain 1"/>
    <property type="match status" value="1"/>
</dbReference>
<dbReference type="Gene3D" id="2.170.200.10">
    <property type="entry name" value="Papillomavirus E2 early protein domain"/>
    <property type="match status" value="1"/>
</dbReference>
<dbReference type="HAMAP" id="MF_04001">
    <property type="entry name" value="PPV_E2"/>
    <property type="match status" value="1"/>
</dbReference>
<dbReference type="InterPro" id="IPR035975">
    <property type="entry name" value="E2/EBNA1_C_sf"/>
</dbReference>
<dbReference type="InterPro" id="IPR012677">
    <property type="entry name" value="Nucleotide-bd_a/b_plait_sf"/>
</dbReference>
<dbReference type="InterPro" id="IPR000427">
    <property type="entry name" value="Papillomavirus_E2_C"/>
</dbReference>
<dbReference type="InterPro" id="IPR001866">
    <property type="entry name" value="PPV_E2_N"/>
</dbReference>
<dbReference type="InterPro" id="IPR033668">
    <property type="entry name" value="Reg_prot_E2"/>
</dbReference>
<dbReference type="InterPro" id="IPR036050">
    <property type="entry name" value="Regulatory_protein_E2_N"/>
</dbReference>
<dbReference type="InterPro" id="IPR042503">
    <property type="entry name" value="Regulatory_protein_E2_N_1"/>
</dbReference>
<dbReference type="InterPro" id="IPR042504">
    <property type="entry name" value="Regulatory_protein_E2_N_2"/>
</dbReference>
<dbReference type="Pfam" id="PF00511">
    <property type="entry name" value="PPV_E2_C"/>
    <property type="match status" value="1"/>
</dbReference>
<dbReference type="Pfam" id="PF00508">
    <property type="entry name" value="PPV_E2_N"/>
    <property type="match status" value="1"/>
</dbReference>
<dbReference type="SUPFAM" id="SSF51332">
    <property type="entry name" value="E2 regulatory, transactivation domain"/>
    <property type="match status" value="1"/>
</dbReference>
<dbReference type="SUPFAM" id="SSF54957">
    <property type="entry name" value="Viral DNA-binding domain"/>
    <property type="match status" value="1"/>
</dbReference>
<organism>
    <name type="scientific">Human papillomavirus type 32</name>
    <dbReference type="NCBI Taxonomy" id="333763"/>
    <lineage>
        <taxon>Viruses</taxon>
        <taxon>Monodnaviria</taxon>
        <taxon>Shotokuvirae</taxon>
        <taxon>Cossaviricota</taxon>
        <taxon>Papovaviricetes</taxon>
        <taxon>Zurhausenvirales</taxon>
        <taxon>Papillomaviridae</taxon>
        <taxon>Firstpapillomavirinae</taxon>
        <taxon>Alphapapillomavirus</taxon>
        <taxon>Alphapapillomavirus 1</taxon>
    </lineage>
</organism>